<protein>
    <recommendedName>
        <fullName evidence="1">Ribonuclease P protein component</fullName>
        <shortName evidence="1">RNase P protein</shortName>
        <shortName evidence="1">RNaseP protein</shortName>
        <ecNumber evidence="1">3.1.26.5</ecNumber>
    </recommendedName>
    <alternativeName>
        <fullName evidence="1">Protein C5</fullName>
    </alternativeName>
</protein>
<reference key="1">
    <citation type="journal article" date="2007" name="Photosyn. Res.">
        <title>Complete nucleotide sequence of the freshwater unicellular cyanobacterium Synechococcus elongatus PCC 6301 chromosome: gene content and organization.</title>
        <authorList>
            <person name="Sugita C."/>
            <person name="Ogata K."/>
            <person name="Shikata M."/>
            <person name="Jikuya H."/>
            <person name="Takano J."/>
            <person name="Furumichi M."/>
            <person name="Kanehisa M."/>
            <person name="Omata T."/>
            <person name="Sugiura M."/>
            <person name="Sugita M."/>
        </authorList>
    </citation>
    <scope>NUCLEOTIDE SEQUENCE [LARGE SCALE GENOMIC DNA]</scope>
    <source>
        <strain>ATCC 27144 / PCC 6301 / SAUG 1402/1</strain>
    </source>
</reference>
<comment type="function">
    <text evidence="1">RNaseP catalyzes the removal of the 5'-leader sequence from pre-tRNA to produce the mature 5'-terminus. It can also cleave other RNA substrates such as 4.5S RNA. The protein component plays an auxiliary but essential role in vivo by binding to the 5'-leader sequence and broadening the substrate specificity of the ribozyme.</text>
</comment>
<comment type="catalytic activity">
    <reaction evidence="1">
        <text>Endonucleolytic cleavage of RNA, removing 5'-extranucleotides from tRNA precursor.</text>
        <dbReference type="EC" id="3.1.26.5"/>
    </reaction>
</comment>
<comment type="subunit">
    <text evidence="1">Consists of a catalytic RNA component (M1 or rnpB) and a protein subunit.</text>
</comment>
<comment type="similarity">
    <text evidence="1">Belongs to the RnpA family.</text>
</comment>
<name>RNPA_SYNP6</name>
<keyword id="KW-0255">Endonuclease</keyword>
<keyword id="KW-0378">Hydrolase</keyword>
<keyword id="KW-0540">Nuclease</keyword>
<keyword id="KW-0694">RNA-binding</keyword>
<keyword id="KW-0819">tRNA processing</keyword>
<sequence length="122" mass="14286">MALPRCHRLRQRDRFPALYRGGRKLSTPSLLLRWLPQAEIESVNESRFAIVISLKVHKRAVRRNRLRRRLQAALLRLRDRLRPGFDGLLTVKPGLDLDTSTSQFLQELEDLLTRAEIIHGRQ</sequence>
<proteinExistence type="inferred from homology"/>
<gene>
    <name evidence="1" type="primary">rnpA</name>
    <name type="ordered locus">syc0072_d</name>
</gene>
<accession>Q5N605</accession>
<feature type="chain" id="PRO_0000198549" description="Ribonuclease P protein component">
    <location>
        <begin position="1"/>
        <end position="122"/>
    </location>
</feature>
<evidence type="ECO:0000255" key="1">
    <source>
        <dbReference type="HAMAP-Rule" id="MF_00227"/>
    </source>
</evidence>
<organism>
    <name type="scientific">Synechococcus sp. (strain ATCC 27144 / PCC 6301 / SAUG 1402/1)</name>
    <name type="common">Anacystis nidulans</name>
    <dbReference type="NCBI Taxonomy" id="269084"/>
    <lineage>
        <taxon>Bacteria</taxon>
        <taxon>Bacillati</taxon>
        <taxon>Cyanobacteriota</taxon>
        <taxon>Cyanophyceae</taxon>
        <taxon>Synechococcales</taxon>
        <taxon>Synechococcaceae</taxon>
        <taxon>Synechococcus</taxon>
    </lineage>
</organism>
<dbReference type="EC" id="3.1.26.5" evidence="1"/>
<dbReference type="EMBL" id="AP008231">
    <property type="protein sequence ID" value="BAD78262.1"/>
    <property type="molecule type" value="Genomic_DNA"/>
</dbReference>
<dbReference type="RefSeq" id="WP_011242385.1">
    <property type="nucleotide sequence ID" value="NZ_CP085785.1"/>
</dbReference>
<dbReference type="SMR" id="Q5N605"/>
<dbReference type="GeneID" id="72430346"/>
<dbReference type="KEGG" id="syc:syc0072_d"/>
<dbReference type="eggNOG" id="COG0594">
    <property type="taxonomic scope" value="Bacteria"/>
</dbReference>
<dbReference type="Proteomes" id="UP000001175">
    <property type="component" value="Chromosome"/>
</dbReference>
<dbReference type="GO" id="GO:0030677">
    <property type="term" value="C:ribonuclease P complex"/>
    <property type="evidence" value="ECO:0007669"/>
    <property type="project" value="TreeGrafter"/>
</dbReference>
<dbReference type="GO" id="GO:0042781">
    <property type="term" value="F:3'-tRNA processing endoribonuclease activity"/>
    <property type="evidence" value="ECO:0007669"/>
    <property type="project" value="TreeGrafter"/>
</dbReference>
<dbReference type="GO" id="GO:0004526">
    <property type="term" value="F:ribonuclease P activity"/>
    <property type="evidence" value="ECO:0007669"/>
    <property type="project" value="UniProtKB-UniRule"/>
</dbReference>
<dbReference type="GO" id="GO:0000049">
    <property type="term" value="F:tRNA binding"/>
    <property type="evidence" value="ECO:0007669"/>
    <property type="project" value="UniProtKB-UniRule"/>
</dbReference>
<dbReference type="GO" id="GO:0001682">
    <property type="term" value="P:tRNA 5'-leader removal"/>
    <property type="evidence" value="ECO:0007669"/>
    <property type="project" value="UniProtKB-UniRule"/>
</dbReference>
<dbReference type="Gene3D" id="3.30.230.10">
    <property type="match status" value="1"/>
</dbReference>
<dbReference type="HAMAP" id="MF_00227">
    <property type="entry name" value="RNase_P"/>
    <property type="match status" value="1"/>
</dbReference>
<dbReference type="InterPro" id="IPR020568">
    <property type="entry name" value="Ribosomal_Su5_D2-typ_SF"/>
</dbReference>
<dbReference type="InterPro" id="IPR014721">
    <property type="entry name" value="Ribsml_uS5_D2-typ_fold_subgr"/>
</dbReference>
<dbReference type="InterPro" id="IPR000100">
    <property type="entry name" value="RNase_P"/>
</dbReference>
<dbReference type="NCBIfam" id="TIGR00188">
    <property type="entry name" value="rnpA"/>
    <property type="match status" value="1"/>
</dbReference>
<dbReference type="PANTHER" id="PTHR33992">
    <property type="entry name" value="RIBONUCLEASE P PROTEIN COMPONENT"/>
    <property type="match status" value="1"/>
</dbReference>
<dbReference type="PANTHER" id="PTHR33992:SF1">
    <property type="entry name" value="RIBONUCLEASE P PROTEIN COMPONENT"/>
    <property type="match status" value="1"/>
</dbReference>
<dbReference type="Pfam" id="PF00825">
    <property type="entry name" value="Ribonuclease_P"/>
    <property type="match status" value="1"/>
</dbReference>
<dbReference type="SUPFAM" id="SSF54211">
    <property type="entry name" value="Ribosomal protein S5 domain 2-like"/>
    <property type="match status" value="1"/>
</dbReference>